<keyword id="KW-1185">Reference proteome</keyword>
<keyword id="KW-0687">Ribonucleoprotein</keyword>
<keyword id="KW-0689">Ribosomal protein</keyword>
<keyword id="KW-0694">RNA-binding</keyword>
<keyword id="KW-0699">rRNA-binding</keyword>
<protein>
    <recommendedName>
        <fullName evidence="1">Large ribosomal subunit protein uL10</fullName>
    </recommendedName>
    <alternativeName>
        <fullName evidence="3">50S ribosomal protein L10</fullName>
    </alternativeName>
    <alternativeName>
        <fullName evidence="1">Acidic ribosomal protein P0 homolog</fullName>
    </alternativeName>
</protein>
<evidence type="ECO:0000255" key="1">
    <source>
        <dbReference type="HAMAP-Rule" id="MF_00280"/>
    </source>
</evidence>
<evidence type="ECO:0000256" key="2">
    <source>
        <dbReference type="SAM" id="MobiDB-lite"/>
    </source>
</evidence>
<evidence type="ECO:0000305" key="3"/>
<proteinExistence type="inferred from homology"/>
<sequence length="332" mass="35543">MHHVADWKKEKVAELEDLTNSHEIIGIVNLADIPAKQLQTMRKSLGDNAILKMSRKNFIKIALENSDKEEVEGLADYLEGQPAMVFTKMNPFKLFKILEDSKTEAPAKAGSIAPADIVVPAGDTSFPPGPILGELQQVGIPAKIDKGSIVVTDDAKIVDEGEEIPKAVADILTKLEIHPMEVGIDLLAVCEGDTIYTADVLAIDEEETIQTLANAYQSAINLSVYAGILNSESAPLLIQKAARDALNLAINANILTSETTDKILSKAYAQMLAVAKLLSSEAIDDELNEKLNSQAAAAPVAVEDNTEEPEEEEEEEEDAAESAAAGLGALFG</sequence>
<feature type="chain" id="PRO_1000006792" description="Large ribosomal subunit protein uL10">
    <location>
        <begin position="1"/>
        <end position="332"/>
    </location>
</feature>
<feature type="region of interest" description="Disordered" evidence="2">
    <location>
        <begin position="294"/>
        <end position="332"/>
    </location>
</feature>
<feature type="compositionally biased region" description="Acidic residues" evidence="2">
    <location>
        <begin position="304"/>
        <end position="320"/>
    </location>
</feature>
<comment type="function">
    <text evidence="1">Forms part of the ribosomal stalk, playing a central role in the interaction of the ribosome with GTP-bound translation factors.</text>
</comment>
<comment type="subunit">
    <text evidence="1">Part of the 50S ribosomal subunit. Forms part of the ribosomal stalk which helps the ribosome interact with GTP-bound translation factors. Forms a heptameric L10(L12)2(L12)2(L12)2 complex, where L10 forms an elongated spine to which the L12 dimers bind in a sequential fashion.</text>
</comment>
<comment type="similarity">
    <text evidence="1">Belongs to the universal ribosomal protein uL10 family.</text>
</comment>
<reference key="1">
    <citation type="journal article" date="2006" name="J. Bacteriol.">
        <title>The genome sequence of Methanosphaera stadtmanae reveals why this human intestinal archaeon is restricted to methanol and H2 for methane formation and ATP synthesis.</title>
        <authorList>
            <person name="Fricke W.F."/>
            <person name="Seedorf H."/>
            <person name="Henne A."/>
            <person name="Kruer M."/>
            <person name="Liesegang H."/>
            <person name="Hedderich R."/>
            <person name="Gottschalk G."/>
            <person name="Thauer R.K."/>
        </authorList>
    </citation>
    <scope>NUCLEOTIDE SEQUENCE [LARGE SCALE GENOMIC DNA]</scope>
    <source>
        <strain>ATCC 43021 / DSM 3091 / JCM 11832 / MCB-3</strain>
    </source>
</reference>
<gene>
    <name evidence="1" type="primary">rpl10</name>
    <name evidence="1" type="synonym">rplP0</name>
    <name type="ordered locus">Msp_1264</name>
</gene>
<dbReference type="EMBL" id="CP000102">
    <property type="protein sequence ID" value="ABC57641.1"/>
    <property type="molecule type" value="Genomic_DNA"/>
</dbReference>
<dbReference type="RefSeq" id="WP_011406840.1">
    <property type="nucleotide sequence ID" value="NC_007681.1"/>
</dbReference>
<dbReference type="SMR" id="Q2NEW2"/>
<dbReference type="STRING" id="339860.Msp_1264"/>
<dbReference type="KEGG" id="mst:Msp_1264"/>
<dbReference type="eggNOG" id="arCOG04288">
    <property type="taxonomic scope" value="Archaea"/>
</dbReference>
<dbReference type="HOGENOM" id="CLU_053173_0_0_2"/>
<dbReference type="OrthoDB" id="30930at2157"/>
<dbReference type="Proteomes" id="UP000001931">
    <property type="component" value="Chromosome"/>
</dbReference>
<dbReference type="GO" id="GO:0022625">
    <property type="term" value="C:cytosolic large ribosomal subunit"/>
    <property type="evidence" value="ECO:0007669"/>
    <property type="project" value="TreeGrafter"/>
</dbReference>
<dbReference type="GO" id="GO:0070180">
    <property type="term" value="F:large ribosomal subunit rRNA binding"/>
    <property type="evidence" value="ECO:0007669"/>
    <property type="project" value="UniProtKB-UniRule"/>
</dbReference>
<dbReference type="GO" id="GO:0003735">
    <property type="term" value="F:structural constituent of ribosome"/>
    <property type="evidence" value="ECO:0007669"/>
    <property type="project" value="TreeGrafter"/>
</dbReference>
<dbReference type="GO" id="GO:0002181">
    <property type="term" value="P:cytoplasmic translation"/>
    <property type="evidence" value="ECO:0007669"/>
    <property type="project" value="TreeGrafter"/>
</dbReference>
<dbReference type="GO" id="GO:0000027">
    <property type="term" value="P:ribosomal large subunit assembly"/>
    <property type="evidence" value="ECO:0007669"/>
    <property type="project" value="TreeGrafter"/>
</dbReference>
<dbReference type="CDD" id="cd05795">
    <property type="entry name" value="Ribosomal_P0_L10e"/>
    <property type="match status" value="1"/>
</dbReference>
<dbReference type="FunFam" id="3.90.105.20:FF:000001">
    <property type="entry name" value="60S acidic ribosomal protein P0"/>
    <property type="match status" value="1"/>
</dbReference>
<dbReference type="Gene3D" id="3.30.70.1730">
    <property type="match status" value="1"/>
</dbReference>
<dbReference type="Gene3D" id="3.90.105.20">
    <property type="match status" value="1"/>
</dbReference>
<dbReference type="Gene3D" id="6.10.140.760">
    <property type="match status" value="1"/>
</dbReference>
<dbReference type="HAMAP" id="MF_00280">
    <property type="entry name" value="Ribosomal_uL10_arch"/>
    <property type="match status" value="1"/>
</dbReference>
<dbReference type="InterPro" id="IPR050323">
    <property type="entry name" value="Ribosomal_protein_uL10"/>
</dbReference>
<dbReference type="InterPro" id="IPR001790">
    <property type="entry name" value="Ribosomal_uL10"/>
</dbReference>
<dbReference type="InterPro" id="IPR040637">
    <property type="entry name" value="Ribosomal_uL10-like_insert"/>
</dbReference>
<dbReference type="InterPro" id="IPR043164">
    <property type="entry name" value="Ribosomal_uL10-like_insert_sf"/>
</dbReference>
<dbReference type="InterPro" id="IPR043141">
    <property type="entry name" value="Ribosomal_uL10-like_sf"/>
</dbReference>
<dbReference type="InterPro" id="IPR022909">
    <property type="entry name" value="Ribosomal_uL10_arc"/>
</dbReference>
<dbReference type="NCBIfam" id="NF003098">
    <property type="entry name" value="PRK04019.1-5"/>
    <property type="match status" value="1"/>
</dbReference>
<dbReference type="PANTHER" id="PTHR45699">
    <property type="entry name" value="60S ACIDIC RIBOSOMAL PROTEIN P0"/>
    <property type="match status" value="1"/>
</dbReference>
<dbReference type="PANTHER" id="PTHR45699:SF3">
    <property type="entry name" value="LARGE RIBOSOMAL SUBUNIT PROTEIN UL10"/>
    <property type="match status" value="1"/>
</dbReference>
<dbReference type="Pfam" id="PF00466">
    <property type="entry name" value="Ribosomal_L10"/>
    <property type="match status" value="1"/>
</dbReference>
<dbReference type="Pfam" id="PF17777">
    <property type="entry name" value="RL10P_insert"/>
    <property type="match status" value="1"/>
</dbReference>
<dbReference type="SUPFAM" id="SSF160369">
    <property type="entry name" value="Ribosomal protein L10-like"/>
    <property type="match status" value="1"/>
</dbReference>
<organism>
    <name type="scientific">Methanosphaera stadtmanae (strain ATCC 43021 / DSM 3091 / JCM 11832 / MCB-3)</name>
    <dbReference type="NCBI Taxonomy" id="339860"/>
    <lineage>
        <taxon>Archaea</taxon>
        <taxon>Methanobacteriati</taxon>
        <taxon>Methanobacteriota</taxon>
        <taxon>Methanomada group</taxon>
        <taxon>Methanobacteria</taxon>
        <taxon>Methanobacteriales</taxon>
        <taxon>Methanobacteriaceae</taxon>
        <taxon>Methanosphaera</taxon>
    </lineage>
</organism>
<name>RL10_METST</name>
<accession>Q2NEW2</accession>